<accession>Q54QN1</accession>
<keyword id="KW-0143">Chaperone</keyword>
<keyword id="KW-0472">Membrane</keyword>
<keyword id="KW-0496">Mitochondrion</keyword>
<keyword id="KW-0999">Mitochondrion inner membrane</keyword>
<keyword id="KW-0653">Protein transport</keyword>
<keyword id="KW-1185">Reference proteome</keyword>
<keyword id="KW-0811">Translocation</keyword>
<keyword id="KW-0812">Transmembrane</keyword>
<keyword id="KW-1133">Transmembrane helix</keyword>
<keyword id="KW-0813">Transport</keyword>
<name>TIM14_DICDI</name>
<gene>
    <name type="primary">dnajc19</name>
    <name type="synonym">tim14</name>
    <name type="synonym">timm14</name>
    <name type="ORF">DDB_G0283735</name>
</gene>
<evidence type="ECO:0000250" key="1">
    <source>
        <dbReference type="UniProtKB" id="Q07914"/>
    </source>
</evidence>
<evidence type="ECO:0000250" key="2">
    <source>
        <dbReference type="UniProtKB" id="Q9CQV7"/>
    </source>
</evidence>
<evidence type="ECO:0000255" key="3"/>
<evidence type="ECO:0000255" key="4">
    <source>
        <dbReference type="PROSITE-ProRule" id="PRU00286"/>
    </source>
</evidence>
<evidence type="ECO:0000305" key="5"/>
<organism>
    <name type="scientific">Dictyostelium discoideum</name>
    <name type="common">Social amoeba</name>
    <dbReference type="NCBI Taxonomy" id="44689"/>
    <lineage>
        <taxon>Eukaryota</taxon>
        <taxon>Amoebozoa</taxon>
        <taxon>Evosea</taxon>
        <taxon>Eumycetozoa</taxon>
        <taxon>Dictyostelia</taxon>
        <taxon>Dictyosteliales</taxon>
        <taxon>Dictyosteliaceae</taxon>
        <taxon>Dictyostelium</taxon>
    </lineage>
</organism>
<sequence>MATPIIVGATIAGIAYSSRFLIRVIQRAKSKQLFEMVSTPGFTVETIEDGFENKMTPAEAANILGLKEESTKEEIKIRHKLLMIKNHPDKGGSSYLATKINEARNVLSSKNSN</sequence>
<feature type="chain" id="PRO_0000331206" description="Mitochondrial import inner membrane translocase subunit TIM14">
    <location>
        <begin position="1"/>
        <end position="113"/>
    </location>
</feature>
<feature type="topological domain" description="Mitochondrial intermembrane" evidence="3">
    <location>
        <begin position="1"/>
        <end position="4"/>
    </location>
</feature>
<feature type="transmembrane region" description="Helical" evidence="3">
    <location>
        <begin position="5"/>
        <end position="22"/>
    </location>
</feature>
<feature type="topological domain" description="Mitochondrial matrix" evidence="3">
    <location>
        <begin position="23"/>
        <end position="113"/>
    </location>
</feature>
<feature type="domain" description="J" evidence="4">
    <location>
        <begin position="59"/>
        <end position="113"/>
    </location>
</feature>
<protein>
    <recommendedName>
        <fullName>Mitochondrial import inner membrane translocase subunit TIM14</fullName>
    </recommendedName>
    <alternativeName>
        <fullName>DnaJ homolog subfamily C member 19</fullName>
    </alternativeName>
</protein>
<comment type="function">
    <text evidence="1 2">Mitochondrial co-chaperone which forms a complex with prohibitins to regulate cardiolipin remodeling (By similarity). May be a component of the PAM complex, a complex required for the translocation of transit peptide-containing proteins from the inner membrane into the mitochondrial matrix in an ATP-dependent manner. May act as a co-chaperone that stimulate the ATP-dependent activity (By similarity).</text>
</comment>
<comment type="subunit">
    <text evidence="1 2">Interacts with PHB2; the interaction associates DNAJC19 with the prohibitin complex. Interacts with TIMM16/PAM16 (By similarity). May be a component of the PAM complex at least composed of a mitochondrial HSP70 protein, GRPEL1 or GRPEL2, TIMM44, TIMM16/PAM16 and TIMM14/DNAJC19 (By similarity).</text>
</comment>
<comment type="subcellular location">
    <subcellularLocation>
        <location evidence="2">Mitochondrion inner membrane</location>
        <topology evidence="3">Single-pass membrane protein</topology>
        <orientation evidence="2">Matrix side</orientation>
    </subcellularLocation>
</comment>
<comment type="similarity">
    <text evidence="5">Belongs to the TIM14 family.</text>
</comment>
<dbReference type="EMBL" id="AAFI02000056">
    <property type="protein sequence ID" value="EAL65634.1"/>
    <property type="molecule type" value="Genomic_DNA"/>
</dbReference>
<dbReference type="RefSeq" id="XP_638992.1">
    <property type="nucleotide sequence ID" value="XM_633900.1"/>
</dbReference>
<dbReference type="SMR" id="Q54QN1"/>
<dbReference type="FunCoup" id="Q54QN1">
    <property type="interactions" value="246"/>
</dbReference>
<dbReference type="STRING" id="44689.Q54QN1"/>
<dbReference type="PaxDb" id="44689-DDB0237975"/>
<dbReference type="EnsemblProtists" id="EAL65634">
    <property type="protein sequence ID" value="EAL65634"/>
    <property type="gene ID" value="DDB_G0283735"/>
</dbReference>
<dbReference type="GeneID" id="8624238"/>
<dbReference type="KEGG" id="ddi:DDB_G0283735"/>
<dbReference type="dictyBase" id="DDB_G0283735">
    <property type="gene designation" value="dnajc19"/>
</dbReference>
<dbReference type="VEuPathDB" id="AmoebaDB:DDB_G0283735"/>
<dbReference type="eggNOG" id="KOG0723">
    <property type="taxonomic scope" value="Eukaryota"/>
</dbReference>
<dbReference type="HOGENOM" id="CLU_017633_13_3_1"/>
<dbReference type="InParanoid" id="Q54QN1"/>
<dbReference type="OMA" id="NELTIYC"/>
<dbReference type="PhylomeDB" id="Q54QN1"/>
<dbReference type="PRO" id="PR:Q54QN1"/>
<dbReference type="Proteomes" id="UP000002195">
    <property type="component" value="Chromosome 4"/>
</dbReference>
<dbReference type="GO" id="GO:0098800">
    <property type="term" value="C:inner mitochondrial membrane protein complex"/>
    <property type="evidence" value="ECO:0000250"/>
    <property type="project" value="UniProtKB"/>
</dbReference>
<dbReference type="GO" id="GO:0099617">
    <property type="term" value="C:matrix side of mitochondrial inner membrane"/>
    <property type="evidence" value="ECO:0000250"/>
    <property type="project" value="UniProtKB"/>
</dbReference>
<dbReference type="GO" id="GO:0001405">
    <property type="term" value="C:PAM complex, Tim23 associated import motor"/>
    <property type="evidence" value="ECO:0000318"/>
    <property type="project" value="GO_Central"/>
</dbReference>
<dbReference type="GO" id="GO:0001671">
    <property type="term" value="F:ATPase activator activity"/>
    <property type="evidence" value="ECO:0000318"/>
    <property type="project" value="GO_Central"/>
</dbReference>
<dbReference type="GO" id="GO:0030150">
    <property type="term" value="P:protein import into mitochondrial matrix"/>
    <property type="evidence" value="ECO:0000318"/>
    <property type="project" value="GO_Central"/>
</dbReference>
<dbReference type="GO" id="GO:1900208">
    <property type="term" value="P:regulation of cardiolipin metabolic process"/>
    <property type="evidence" value="ECO:0000250"/>
    <property type="project" value="UniProtKB"/>
</dbReference>
<dbReference type="CDD" id="cd06257">
    <property type="entry name" value="DnaJ"/>
    <property type="match status" value="1"/>
</dbReference>
<dbReference type="FunFam" id="1.10.287.110:FF:000001">
    <property type="entry name" value="Import inner membrane translocase subunit tim14"/>
    <property type="match status" value="1"/>
</dbReference>
<dbReference type="Gene3D" id="1.10.287.110">
    <property type="entry name" value="DnaJ domain"/>
    <property type="match status" value="1"/>
</dbReference>
<dbReference type="InterPro" id="IPR001623">
    <property type="entry name" value="DnaJ_domain"/>
</dbReference>
<dbReference type="InterPro" id="IPR036869">
    <property type="entry name" value="J_dom_sf"/>
</dbReference>
<dbReference type="PANTHER" id="PTHR12763">
    <property type="match status" value="1"/>
</dbReference>
<dbReference type="PANTHER" id="PTHR12763:SF28">
    <property type="entry name" value="GEO10507P1-RELATED"/>
    <property type="match status" value="1"/>
</dbReference>
<dbReference type="Pfam" id="PF00226">
    <property type="entry name" value="DnaJ"/>
    <property type="match status" value="1"/>
</dbReference>
<dbReference type="SMART" id="SM00271">
    <property type="entry name" value="DnaJ"/>
    <property type="match status" value="1"/>
</dbReference>
<dbReference type="SUPFAM" id="SSF46565">
    <property type="entry name" value="Chaperone J-domain"/>
    <property type="match status" value="1"/>
</dbReference>
<dbReference type="PROSITE" id="PS50076">
    <property type="entry name" value="DNAJ_2"/>
    <property type="match status" value="1"/>
</dbReference>
<reference key="1">
    <citation type="journal article" date="2005" name="Nature">
        <title>The genome of the social amoeba Dictyostelium discoideum.</title>
        <authorList>
            <person name="Eichinger L."/>
            <person name="Pachebat J.A."/>
            <person name="Gloeckner G."/>
            <person name="Rajandream M.A."/>
            <person name="Sucgang R."/>
            <person name="Berriman M."/>
            <person name="Song J."/>
            <person name="Olsen R."/>
            <person name="Szafranski K."/>
            <person name="Xu Q."/>
            <person name="Tunggal B."/>
            <person name="Kummerfeld S."/>
            <person name="Madera M."/>
            <person name="Konfortov B.A."/>
            <person name="Rivero F."/>
            <person name="Bankier A.T."/>
            <person name="Lehmann R."/>
            <person name="Hamlin N."/>
            <person name="Davies R."/>
            <person name="Gaudet P."/>
            <person name="Fey P."/>
            <person name="Pilcher K."/>
            <person name="Chen G."/>
            <person name="Saunders D."/>
            <person name="Sodergren E.J."/>
            <person name="Davis P."/>
            <person name="Kerhornou A."/>
            <person name="Nie X."/>
            <person name="Hall N."/>
            <person name="Anjard C."/>
            <person name="Hemphill L."/>
            <person name="Bason N."/>
            <person name="Farbrother P."/>
            <person name="Desany B."/>
            <person name="Just E."/>
            <person name="Morio T."/>
            <person name="Rost R."/>
            <person name="Churcher C.M."/>
            <person name="Cooper J."/>
            <person name="Haydock S."/>
            <person name="van Driessche N."/>
            <person name="Cronin A."/>
            <person name="Goodhead I."/>
            <person name="Muzny D.M."/>
            <person name="Mourier T."/>
            <person name="Pain A."/>
            <person name="Lu M."/>
            <person name="Harper D."/>
            <person name="Lindsay R."/>
            <person name="Hauser H."/>
            <person name="James K.D."/>
            <person name="Quiles M."/>
            <person name="Madan Babu M."/>
            <person name="Saito T."/>
            <person name="Buchrieser C."/>
            <person name="Wardroper A."/>
            <person name="Felder M."/>
            <person name="Thangavelu M."/>
            <person name="Johnson D."/>
            <person name="Knights A."/>
            <person name="Loulseged H."/>
            <person name="Mungall K.L."/>
            <person name="Oliver K."/>
            <person name="Price C."/>
            <person name="Quail M.A."/>
            <person name="Urushihara H."/>
            <person name="Hernandez J."/>
            <person name="Rabbinowitsch E."/>
            <person name="Steffen D."/>
            <person name="Sanders M."/>
            <person name="Ma J."/>
            <person name="Kohara Y."/>
            <person name="Sharp S."/>
            <person name="Simmonds M.N."/>
            <person name="Spiegler S."/>
            <person name="Tivey A."/>
            <person name="Sugano S."/>
            <person name="White B."/>
            <person name="Walker D."/>
            <person name="Woodward J.R."/>
            <person name="Winckler T."/>
            <person name="Tanaka Y."/>
            <person name="Shaulsky G."/>
            <person name="Schleicher M."/>
            <person name="Weinstock G.M."/>
            <person name="Rosenthal A."/>
            <person name="Cox E.C."/>
            <person name="Chisholm R.L."/>
            <person name="Gibbs R.A."/>
            <person name="Loomis W.F."/>
            <person name="Platzer M."/>
            <person name="Kay R.R."/>
            <person name="Williams J.G."/>
            <person name="Dear P.H."/>
            <person name="Noegel A.A."/>
            <person name="Barrell B.G."/>
            <person name="Kuspa A."/>
        </authorList>
    </citation>
    <scope>NUCLEOTIDE SEQUENCE [LARGE SCALE GENOMIC DNA]</scope>
    <source>
        <strain>AX4</strain>
    </source>
</reference>
<proteinExistence type="inferred from homology"/>